<dbReference type="EC" id="3.1.-.-" evidence="1"/>
<dbReference type="EMBL" id="CP001638">
    <property type="protein sequence ID" value="ACS23685.1"/>
    <property type="molecule type" value="Genomic_DNA"/>
</dbReference>
<dbReference type="SMR" id="C5D7C7"/>
<dbReference type="STRING" id="471223.GWCH70_0799"/>
<dbReference type="KEGG" id="gwc:GWCH70_0799"/>
<dbReference type="eggNOG" id="COG1514">
    <property type="taxonomic scope" value="Bacteria"/>
</dbReference>
<dbReference type="HOGENOM" id="CLU_132020_0_0_9"/>
<dbReference type="OrthoDB" id="1524661at2"/>
<dbReference type="GO" id="GO:0016788">
    <property type="term" value="F:hydrolase activity, acting on ester bonds"/>
    <property type="evidence" value="ECO:0007669"/>
    <property type="project" value="UniProtKB-UniRule"/>
</dbReference>
<dbReference type="Gene3D" id="3.90.1140.10">
    <property type="entry name" value="Cyclic phosphodiesterase"/>
    <property type="match status" value="1"/>
</dbReference>
<dbReference type="HAMAP" id="MF_01444">
    <property type="entry name" value="2H_phosphoesterase_YjcG"/>
    <property type="match status" value="1"/>
</dbReference>
<dbReference type="InterPro" id="IPR050580">
    <property type="entry name" value="2H_phosphoesterase_YjcG-like"/>
</dbReference>
<dbReference type="InterPro" id="IPR009097">
    <property type="entry name" value="Cyclic_Pdiesterase"/>
</dbReference>
<dbReference type="InterPro" id="IPR022932">
    <property type="entry name" value="YjcG"/>
</dbReference>
<dbReference type="NCBIfam" id="NF010223">
    <property type="entry name" value="PRK13679.1"/>
    <property type="match status" value="1"/>
</dbReference>
<dbReference type="PANTHER" id="PTHR40037:SF1">
    <property type="entry name" value="PHOSPHOESTERASE SAOUHSC_00951-RELATED"/>
    <property type="match status" value="1"/>
</dbReference>
<dbReference type="PANTHER" id="PTHR40037">
    <property type="entry name" value="PHOSPHOESTERASE YJCG-RELATED"/>
    <property type="match status" value="1"/>
</dbReference>
<dbReference type="Pfam" id="PF13563">
    <property type="entry name" value="2_5_RNA_ligase2"/>
    <property type="match status" value="1"/>
</dbReference>
<dbReference type="SUPFAM" id="SSF55144">
    <property type="entry name" value="LigT-like"/>
    <property type="match status" value="1"/>
</dbReference>
<feature type="chain" id="PRO_1000215292" description="Putative phosphoesterase GWCH70_0799">
    <location>
        <begin position="1"/>
        <end position="173"/>
    </location>
</feature>
<feature type="short sequence motif" description="HXTX 1" evidence="1">
    <location>
        <begin position="34"/>
        <end position="37"/>
    </location>
</feature>
<feature type="short sequence motif" description="HXTX 2" evidence="1">
    <location>
        <begin position="115"/>
        <end position="118"/>
    </location>
</feature>
<feature type="active site" description="Proton donor" evidence="1">
    <location>
        <position position="34"/>
    </location>
</feature>
<feature type="active site" description="Proton acceptor" evidence="1">
    <location>
        <position position="115"/>
    </location>
</feature>
<reference key="1">
    <citation type="submission" date="2009-06" db="EMBL/GenBank/DDBJ databases">
        <title>Complete sequence of chromosome of Geopacillus sp. WCH70.</title>
        <authorList>
            <consortium name="US DOE Joint Genome Institute"/>
            <person name="Lucas S."/>
            <person name="Copeland A."/>
            <person name="Lapidus A."/>
            <person name="Glavina del Rio T."/>
            <person name="Dalin E."/>
            <person name="Tice H."/>
            <person name="Bruce D."/>
            <person name="Goodwin L."/>
            <person name="Pitluck S."/>
            <person name="Chertkov O."/>
            <person name="Brettin T."/>
            <person name="Detter J.C."/>
            <person name="Han C."/>
            <person name="Larimer F."/>
            <person name="Land M."/>
            <person name="Hauser L."/>
            <person name="Kyrpides N."/>
            <person name="Mikhailova N."/>
            <person name="Brumm P."/>
            <person name="Mead D.A."/>
            <person name="Richardson P."/>
        </authorList>
    </citation>
    <scope>NUCLEOTIDE SEQUENCE [LARGE SCALE GENOMIC DNA]</scope>
    <source>
        <strain>WCH70</strain>
    </source>
</reference>
<sequence length="173" mass="20267">MKYGIALFPSKRIQDFANSYRKRYDSHYALIPPHLTLKEPFEADDQKIKEIVKELRKIAAETDVIPLKVTKFSSFYPTSNVIYLKVEPNETLERLHERLHSGILADKSEYVFVPHITIGRDLPNAEYADVYGQLRMQNVHFEETVDRFHLLYQLENGSWTVYETFLVGGKEQE</sequence>
<protein>
    <recommendedName>
        <fullName evidence="1">Putative phosphoesterase GWCH70_0799</fullName>
        <ecNumber evidence="1">3.1.-.-</ecNumber>
    </recommendedName>
</protein>
<name>Y799_GEOSW</name>
<keyword id="KW-0378">Hydrolase</keyword>
<accession>C5D7C7</accession>
<proteinExistence type="inferred from homology"/>
<comment type="similarity">
    <text evidence="1">Belongs to the 2H phosphoesterase superfamily. YjcG family.</text>
</comment>
<evidence type="ECO:0000255" key="1">
    <source>
        <dbReference type="HAMAP-Rule" id="MF_01444"/>
    </source>
</evidence>
<organism>
    <name type="scientific">Geobacillus sp. (strain WCH70)</name>
    <dbReference type="NCBI Taxonomy" id="471223"/>
    <lineage>
        <taxon>Bacteria</taxon>
        <taxon>Bacillati</taxon>
        <taxon>Bacillota</taxon>
        <taxon>Bacilli</taxon>
        <taxon>Bacillales</taxon>
        <taxon>Anoxybacillaceae</taxon>
        <taxon>Geobacillus</taxon>
    </lineage>
</organism>
<gene>
    <name type="ordered locus">GWCH70_0799</name>
</gene>